<name>IFT88_MOUSE</name>
<reference key="1">
    <citation type="journal article" date="1994" name="Science">
        <title>Candidate gene associated with a mutation causing recessive polycystic kidney disease in mice.</title>
        <authorList>
            <person name="Moyer J.H."/>
            <person name="Lee-Tischler M.J."/>
            <person name="Kwon H.-Y."/>
            <person name="Schrick J.J."/>
            <person name="Avner E.D."/>
            <person name="Sweeney W.E."/>
            <person name="Godfrey V.L."/>
            <person name="Cacheiro N.L."/>
            <person name="Wilkinson J.E."/>
            <person name="Woychik R.P."/>
        </authorList>
    </citation>
    <scope>NUCLEOTIDE SEQUENCE [MRNA]</scope>
    <scope>INVOLVEMENT IN PKD</scope>
    <source>
        <strain>C3HF/RL</strain>
    </source>
</reference>
<reference key="2">
    <citation type="journal article" date="2005" name="Science">
        <title>The transcriptional landscape of the mammalian genome.</title>
        <authorList>
            <person name="Carninci P."/>
            <person name="Kasukawa T."/>
            <person name="Katayama S."/>
            <person name="Gough J."/>
            <person name="Frith M.C."/>
            <person name="Maeda N."/>
            <person name="Oyama R."/>
            <person name="Ravasi T."/>
            <person name="Lenhard B."/>
            <person name="Wells C."/>
            <person name="Kodzius R."/>
            <person name="Shimokawa K."/>
            <person name="Bajic V.B."/>
            <person name="Brenner S.E."/>
            <person name="Batalov S."/>
            <person name="Forrest A.R."/>
            <person name="Zavolan M."/>
            <person name="Davis M.J."/>
            <person name="Wilming L.G."/>
            <person name="Aidinis V."/>
            <person name="Allen J.E."/>
            <person name="Ambesi-Impiombato A."/>
            <person name="Apweiler R."/>
            <person name="Aturaliya R.N."/>
            <person name="Bailey T.L."/>
            <person name="Bansal M."/>
            <person name="Baxter L."/>
            <person name="Beisel K.W."/>
            <person name="Bersano T."/>
            <person name="Bono H."/>
            <person name="Chalk A.M."/>
            <person name="Chiu K.P."/>
            <person name="Choudhary V."/>
            <person name="Christoffels A."/>
            <person name="Clutterbuck D.R."/>
            <person name="Crowe M.L."/>
            <person name="Dalla E."/>
            <person name="Dalrymple B.P."/>
            <person name="de Bono B."/>
            <person name="Della Gatta G."/>
            <person name="di Bernardo D."/>
            <person name="Down T."/>
            <person name="Engstrom P."/>
            <person name="Fagiolini M."/>
            <person name="Faulkner G."/>
            <person name="Fletcher C.F."/>
            <person name="Fukushima T."/>
            <person name="Furuno M."/>
            <person name="Futaki S."/>
            <person name="Gariboldi M."/>
            <person name="Georgii-Hemming P."/>
            <person name="Gingeras T.R."/>
            <person name="Gojobori T."/>
            <person name="Green R.E."/>
            <person name="Gustincich S."/>
            <person name="Harbers M."/>
            <person name="Hayashi Y."/>
            <person name="Hensch T.K."/>
            <person name="Hirokawa N."/>
            <person name="Hill D."/>
            <person name="Huminiecki L."/>
            <person name="Iacono M."/>
            <person name="Ikeo K."/>
            <person name="Iwama A."/>
            <person name="Ishikawa T."/>
            <person name="Jakt M."/>
            <person name="Kanapin A."/>
            <person name="Katoh M."/>
            <person name="Kawasawa Y."/>
            <person name="Kelso J."/>
            <person name="Kitamura H."/>
            <person name="Kitano H."/>
            <person name="Kollias G."/>
            <person name="Krishnan S.P."/>
            <person name="Kruger A."/>
            <person name="Kummerfeld S.K."/>
            <person name="Kurochkin I.V."/>
            <person name="Lareau L.F."/>
            <person name="Lazarevic D."/>
            <person name="Lipovich L."/>
            <person name="Liu J."/>
            <person name="Liuni S."/>
            <person name="McWilliam S."/>
            <person name="Madan Babu M."/>
            <person name="Madera M."/>
            <person name="Marchionni L."/>
            <person name="Matsuda H."/>
            <person name="Matsuzawa S."/>
            <person name="Miki H."/>
            <person name="Mignone F."/>
            <person name="Miyake S."/>
            <person name="Morris K."/>
            <person name="Mottagui-Tabar S."/>
            <person name="Mulder N."/>
            <person name="Nakano N."/>
            <person name="Nakauchi H."/>
            <person name="Ng P."/>
            <person name="Nilsson R."/>
            <person name="Nishiguchi S."/>
            <person name="Nishikawa S."/>
            <person name="Nori F."/>
            <person name="Ohara O."/>
            <person name="Okazaki Y."/>
            <person name="Orlando V."/>
            <person name="Pang K.C."/>
            <person name="Pavan W.J."/>
            <person name="Pavesi G."/>
            <person name="Pesole G."/>
            <person name="Petrovsky N."/>
            <person name="Piazza S."/>
            <person name="Reed J."/>
            <person name="Reid J.F."/>
            <person name="Ring B.Z."/>
            <person name="Ringwald M."/>
            <person name="Rost B."/>
            <person name="Ruan Y."/>
            <person name="Salzberg S.L."/>
            <person name="Sandelin A."/>
            <person name="Schneider C."/>
            <person name="Schoenbach C."/>
            <person name="Sekiguchi K."/>
            <person name="Semple C.A."/>
            <person name="Seno S."/>
            <person name="Sessa L."/>
            <person name="Sheng Y."/>
            <person name="Shibata Y."/>
            <person name="Shimada H."/>
            <person name="Shimada K."/>
            <person name="Silva D."/>
            <person name="Sinclair B."/>
            <person name="Sperling S."/>
            <person name="Stupka E."/>
            <person name="Sugiura K."/>
            <person name="Sultana R."/>
            <person name="Takenaka Y."/>
            <person name="Taki K."/>
            <person name="Tammoja K."/>
            <person name="Tan S.L."/>
            <person name="Tang S."/>
            <person name="Taylor M.S."/>
            <person name="Tegner J."/>
            <person name="Teichmann S.A."/>
            <person name="Ueda H.R."/>
            <person name="van Nimwegen E."/>
            <person name="Verardo R."/>
            <person name="Wei C.L."/>
            <person name="Yagi K."/>
            <person name="Yamanishi H."/>
            <person name="Zabarovsky E."/>
            <person name="Zhu S."/>
            <person name="Zimmer A."/>
            <person name="Hide W."/>
            <person name="Bult C."/>
            <person name="Grimmond S.M."/>
            <person name="Teasdale R.D."/>
            <person name="Liu E.T."/>
            <person name="Brusic V."/>
            <person name="Quackenbush J."/>
            <person name="Wahlestedt C."/>
            <person name="Mattick J.S."/>
            <person name="Hume D.A."/>
            <person name="Kai C."/>
            <person name="Sasaki D."/>
            <person name="Tomaru Y."/>
            <person name="Fukuda S."/>
            <person name="Kanamori-Katayama M."/>
            <person name="Suzuki M."/>
            <person name="Aoki J."/>
            <person name="Arakawa T."/>
            <person name="Iida J."/>
            <person name="Imamura K."/>
            <person name="Itoh M."/>
            <person name="Kato T."/>
            <person name="Kawaji H."/>
            <person name="Kawagashira N."/>
            <person name="Kawashima T."/>
            <person name="Kojima M."/>
            <person name="Kondo S."/>
            <person name="Konno H."/>
            <person name="Nakano K."/>
            <person name="Ninomiya N."/>
            <person name="Nishio T."/>
            <person name="Okada M."/>
            <person name="Plessy C."/>
            <person name="Shibata K."/>
            <person name="Shiraki T."/>
            <person name="Suzuki S."/>
            <person name="Tagami M."/>
            <person name="Waki K."/>
            <person name="Watahiki A."/>
            <person name="Okamura-Oho Y."/>
            <person name="Suzuki H."/>
            <person name="Kawai J."/>
            <person name="Hayashizaki Y."/>
        </authorList>
    </citation>
    <scope>NUCLEOTIDE SEQUENCE [LARGE SCALE MRNA]</scope>
    <source>
        <strain>C57BL/6J</strain>
        <tissue>Olfactory bulb</tissue>
    </source>
</reference>
<reference key="3">
    <citation type="journal article" date="2009" name="PLoS Biol.">
        <title>Lineage-specific biology revealed by a finished genome assembly of the mouse.</title>
        <authorList>
            <person name="Church D.M."/>
            <person name="Goodstadt L."/>
            <person name="Hillier L.W."/>
            <person name="Zody M.C."/>
            <person name="Goldstein S."/>
            <person name="She X."/>
            <person name="Bult C.J."/>
            <person name="Agarwala R."/>
            <person name="Cherry J.L."/>
            <person name="DiCuccio M."/>
            <person name="Hlavina W."/>
            <person name="Kapustin Y."/>
            <person name="Meric P."/>
            <person name="Maglott D."/>
            <person name="Birtle Z."/>
            <person name="Marques A.C."/>
            <person name="Graves T."/>
            <person name="Zhou S."/>
            <person name="Teague B."/>
            <person name="Potamousis K."/>
            <person name="Churas C."/>
            <person name="Place M."/>
            <person name="Herschleb J."/>
            <person name="Runnheim R."/>
            <person name="Forrest D."/>
            <person name="Amos-Landgraf J."/>
            <person name="Schwartz D.C."/>
            <person name="Cheng Z."/>
            <person name="Lindblad-Toh K."/>
            <person name="Eichler E.E."/>
            <person name="Ponting C.P."/>
        </authorList>
    </citation>
    <scope>NUCLEOTIDE SEQUENCE [LARGE SCALE GENOMIC DNA]</scope>
    <source>
        <strain>C57BL/6J</strain>
    </source>
</reference>
<reference key="4">
    <citation type="journal article" date="2004" name="Genome Res.">
        <title>The status, quality, and expansion of the NIH full-length cDNA project: the Mammalian Gene Collection (MGC).</title>
        <authorList>
            <consortium name="The MGC Project Team"/>
        </authorList>
    </citation>
    <scope>NUCLEOTIDE SEQUENCE [LARGE SCALE MRNA]</scope>
    <source>
        <strain>Czech II</strain>
        <tissue>Mammary tumor</tissue>
    </source>
</reference>
<reference key="5">
    <citation type="journal article" date="2000" name="J. Cell Biol.">
        <title>Chlamydomonas IFT88 and its mouse homologue, polycystic kidney disease gene tg737, are required for assembly of cilia and flagella.</title>
        <authorList>
            <person name="Pazour G.J."/>
            <person name="Dickert B.L."/>
            <person name="Vucica Y."/>
            <person name="Seeley E.S."/>
            <person name="Rosenbaum J.L."/>
            <person name="Witman G.B."/>
            <person name="Cole D.G."/>
        </authorList>
    </citation>
    <scope>FUNCTION</scope>
    <scope>INTERACTION WITH IFT57 AND IFT172</scope>
</reference>
<reference key="6">
    <citation type="journal article" date="2007" name="J. Cell Biol.">
        <title>Functional analysis of an individual IFT protein: IFT46 is required for transport of outer dynein arms into flagella.</title>
        <authorList>
            <person name="Hou Y."/>
            <person name="Qin H."/>
            <person name="Follit J.A."/>
            <person name="Pazour G.J."/>
            <person name="Rosenbaum J.L."/>
            <person name="Witman G.B."/>
        </authorList>
    </citation>
    <scope>INTERACTION WITH IFT46</scope>
</reference>
<reference key="7">
    <citation type="journal article" date="2009" name="Cell Motil. Cytoskeleton">
        <title>Characterization of mouse IFT complex B.</title>
        <authorList>
            <person name="Follit J.A."/>
            <person name="Xu F."/>
            <person name="Keady B.T."/>
            <person name="Pazour G.J."/>
        </authorList>
    </citation>
    <scope>IDENTIFICATION IN THE IFT COMPLEX B</scope>
    <scope>INTERACTION WITH IFT20; IFT22; IFT25; IFT27; IFT46; IFT52; TRAF3IP1; IFT57; IFT74; IFT80 AND IFT81</scope>
    <scope>SUBCELLULAR LOCATION</scope>
</reference>
<reference key="8">
    <citation type="journal article" date="2010" name="Cell">
        <title>A tissue-specific atlas of mouse protein phosphorylation and expression.</title>
        <authorList>
            <person name="Huttlin E.L."/>
            <person name="Jedrychowski M.P."/>
            <person name="Elias J.E."/>
            <person name="Goswami T."/>
            <person name="Rad R."/>
            <person name="Beausoleil S.A."/>
            <person name="Villen J."/>
            <person name="Haas W."/>
            <person name="Sowa M.E."/>
            <person name="Gygi S.P."/>
        </authorList>
    </citation>
    <scope>IDENTIFICATION BY MASS SPECTROMETRY [LARGE SCALE ANALYSIS]</scope>
    <source>
        <tissue>Testis</tissue>
    </source>
</reference>
<reference key="9">
    <citation type="journal article" date="2010" name="Dev. Cell">
        <title>Ofd1, a human disease gene, regulates the length and distal structure of centrioles.</title>
        <authorList>
            <person name="Singla V."/>
            <person name="Romaguera-Ros M."/>
            <person name="Garcia-Verdugo J.M."/>
            <person name="Reiter J.F."/>
        </authorList>
    </citation>
    <scope>SUBCELLULAR LOCATION</scope>
</reference>
<reference key="10">
    <citation type="journal article" date="2011" name="Mol. Biol. Cell">
        <title>Functional characterization of putative cilia genes by high-content analysis.</title>
        <authorList>
            <person name="Lai C.K."/>
            <person name="Gupta N."/>
            <person name="Wen X."/>
            <person name="Rangell L."/>
            <person name="Chih B."/>
            <person name="Peterson A.S."/>
            <person name="Bazan J.F."/>
            <person name="Li L."/>
            <person name="Scales S.J."/>
        </authorList>
    </citation>
    <scope>DISRUPTION PHENOTYPE</scope>
    <scope>FUNCTION</scope>
</reference>
<reference key="11">
    <citation type="journal article" date="2013" name="EMBO J.">
        <title>Kif3a interacts with Dynactin subunit p150 Glued to organize centriole subdistal appendages.</title>
        <authorList>
            <person name="Kodani A."/>
            <person name="Salome Sirerol-Piquer M."/>
            <person name="Seol A."/>
            <person name="Garcia-Verdugo J.M."/>
            <person name="Reiter J.F."/>
        </authorList>
    </citation>
    <scope>SUBCELLULAR LOCATION</scope>
</reference>
<reference key="12">
    <citation type="journal article" date="2013" name="Exp. Cell Res.">
        <title>Interaction of mouse TTC30/DYF-1 with multiple intraflagellar transport complex B proteins and KIF17.</title>
        <authorList>
            <person name="Howard P.W."/>
            <person name="Jue S.F."/>
            <person name="Maurer R.A."/>
        </authorList>
    </citation>
    <scope>IDENTIFICATION IN THE IFT COMPLEX B</scope>
    <scope>INTERACTION WITH IFT57 AND IFT70B</scope>
</reference>
<reference key="13">
    <citation type="journal article" date="2013" name="J. Biol. Chem.">
        <title>Centrosomal protein DZIP1 regulates Hedgehog signaling by promoting cytoplasmic retention of transcription factor GLI3 and affecting ciliogenesis.</title>
        <authorList>
            <person name="Wang C."/>
            <person name="Low W.C."/>
            <person name="Liu A."/>
            <person name="Wang B."/>
        </authorList>
    </citation>
    <scope>INTERACTION WITH DZIP1</scope>
</reference>
<reference key="14">
    <citation type="journal article" date="2013" name="Nature">
        <title>Functional interaction between autophagy and ciliogenesis.</title>
        <authorList>
            <person name="Pampliega O."/>
            <person name="Orhon I."/>
            <person name="Patel B."/>
            <person name="Sridhar S."/>
            <person name="Diaz-Carretero A."/>
            <person name="Beau I."/>
            <person name="Codogno P."/>
            <person name="Satir B.H."/>
            <person name="Satir P."/>
            <person name="Cuervo A.M."/>
        </authorList>
    </citation>
    <scope>SUBCELLULAR LOCATION</scope>
</reference>
<reference key="15">
    <citation type="journal article" date="2014" name="Proc. Natl. Acad. Sci. U.S.A.">
        <title>C2cd3 is critical for centriolar distal appendage assembly and ciliary vesicle docking in mammals.</title>
        <authorList>
            <person name="Ye X."/>
            <person name="Zeng H."/>
            <person name="Ning G."/>
            <person name="Reiter J.F."/>
            <person name="Liu A."/>
        </authorList>
    </citation>
    <scope>INTERACTION WITH C2CD3</scope>
</reference>
<reference key="16">
    <citation type="journal article" date="2016" name="Mol. Biol. Cell">
        <title>Intraflagellar transport protein IFT20 is essential for male fertility and spermiogenesis in mice.</title>
        <authorList>
            <person name="Zhang Z."/>
            <person name="Li W."/>
            <person name="Zhang Y."/>
            <person name="Zhang L."/>
            <person name="Teves M.E."/>
            <person name="Liu H."/>
            <person name="Strauss J.F. III"/>
            <person name="Pazour G.J."/>
            <person name="Foster J.A."/>
            <person name="Hess R.A."/>
            <person name="Zhang Z."/>
        </authorList>
    </citation>
    <scope>SUBCELLULAR LOCATION</scope>
    <scope>TISSUE SPECIFICITY</scope>
</reference>
<reference key="17">
    <citation type="journal article" date="2019" name="Cell">
        <title>Omega-3 Fatty Acids Activate Ciliary FFAR4 to Control Adipogenesis.</title>
        <authorList>
            <person name="Hilgendorf K.I."/>
            <person name="Johnson C.T."/>
            <person name="Mezger A."/>
            <person name="Rice S.L."/>
            <person name="Norris A.M."/>
            <person name="Demeter J."/>
            <person name="Greenleaf W.J."/>
            <person name="Reiter J.F."/>
            <person name="Kopinke D."/>
            <person name="Jackson P.K."/>
        </authorList>
    </citation>
    <scope>DISRUPTION PHENOTYPE</scope>
    <scope>FUNCTION</scope>
</reference>
<reference key="18">
    <citation type="journal article" date="2021" name="Front. Cell Dev. Biol.">
        <title>Essential Role of CFAP53 in Sperm Flagellum Biogenesis.</title>
        <authorList>
            <person name="Wu B."/>
            <person name="Yu X."/>
            <person name="Liu C."/>
            <person name="Wang L."/>
            <person name="Huang T."/>
            <person name="Lu G."/>
            <person name="Chen Z.J."/>
            <person name="Li W."/>
            <person name="Liu H."/>
        </authorList>
    </citation>
    <scope>INTERACTION WITH CFAP53</scope>
    <scope>SUBCELLULAR LOCATION</scope>
    <scope>DEVELOPMENTAL STAGE</scope>
</reference>
<reference key="19">
    <citation type="journal article" date="2022" name="Development">
        <title>CCDC38 is required for sperm flagellum biogenesis and male fertility in mice.</title>
        <authorList>
            <person name="Zhang R."/>
            <person name="Wu B."/>
            <person name="Liu C."/>
            <person name="Zhang Z."/>
            <person name="Wang X."/>
            <person name="Wang L."/>
            <person name="Xiao S."/>
            <person name="Chen Y."/>
            <person name="Wei H."/>
            <person name="Jiang H."/>
            <person name="Gao F."/>
            <person name="Yuan L."/>
            <person name="Li W."/>
        </authorList>
    </citation>
    <scope>INTERACTION WITH CCDC38</scope>
</reference>
<reference key="20">
    <citation type="journal article" date="2023" name="Cell. Mol. Life Sci.">
        <title>CCDC146 is required for sperm flagellum biogenesis and male fertility in mice.</title>
        <authorList>
            <person name="Ma Y."/>
            <person name="Wu B."/>
            <person name="Chen Y."/>
            <person name="Ma S."/>
            <person name="Wang L."/>
            <person name="Han T."/>
            <person name="Lin X."/>
            <person name="Yang F."/>
            <person name="Liu C."/>
            <person name="Zhao J."/>
            <person name="Li W."/>
        </authorList>
    </citation>
    <scope>INTERACTION WITH CCDC146</scope>
</reference>
<gene>
    <name type="primary">Ift88</name>
    <name type="synonym">Tg737</name>
    <name type="synonym">Tg737Rpw</name>
    <name type="synonym">TgN737Rpw</name>
    <name type="synonym">Ttc10</name>
</gene>
<keyword id="KW-0966">Cell projection</keyword>
<keyword id="KW-0969">Cilium</keyword>
<keyword id="KW-0970">Cilium biogenesis/degradation</keyword>
<keyword id="KW-0963">Cytoplasm</keyword>
<keyword id="KW-0206">Cytoskeleton</keyword>
<keyword id="KW-0282">Flagellum</keyword>
<keyword id="KW-1185">Reference proteome</keyword>
<keyword id="KW-0677">Repeat</keyword>
<keyword id="KW-0802">TPR repeat</keyword>
<dbReference type="EMBL" id="L31959">
    <property type="protein sequence ID" value="AAB59705.1"/>
    <property type="molecule type" value="mRNA"/>
</dbReference>
<dbReference type="EMBL" id="AK135110">
    <property type="protein sequence ID" value="BAE22424.1"/>
    <property type="status" value="ALT_INIT"/>
    <property type="molecule type" value="mRNA"/>
</dbReference>
<dbReference type="EMBL" id="AC124462">
    <property type="status" value="NOT_ANNOTATED_CDS"/>
    <property type="molecule type" value="Genomic_DNA"/>
</dbReference>
<dbReference type="EMBL" id="AC154675">
    <property type="status" value="NOT_ANNOTATED_CDS"/>
    <property type="molecule type" value="Genomic_DNA"/>
</dbReference>
<dbReference type="EMBL" id="BC012250">
    <property type="protein sequence ID" value="AAH12250.1"/>
    <property type="molecule type" value="mRNA"/>
</dbReference>
<dbReference type="PIR" id="I49564">
    <property type="entry name" value="I49564"/>
</dbReference>
<dbReference type="RefSeq" id="NP_033402.2">
    <property type="nucleotide sequence ID" value="NM_009376.2"/>
</dbReference>
<dbReference type="SMR" id="Q61371"/>
<dbReference type="BioGRID" id="204171">
    <property type="interactions" value="14"/>
</dbReference>
<dbReference type="ComplexPortal" id="CPX-5028">
    <property type="entry name" value="Intraflagellar transport complex B"/>
</dbReference>
<dbReference type="CORUM" id="Q61371"/>
<dbReference type="FunCoup" id="Q61371">
    <property type="interactions" value="863"/>
</dbReference>
<dbReference type="STRING" id="10090.ENSMUSP00000113768"/>
<dbReference type="MoonProt" id="Q61371"/>
<dbReference type="iPTMnet" id="Q61371"/>
<dbReference type="PhosphoSitePlus" id="Q61371"/>
<dbReference type="PaxDb" id="10090-ENSMUSP00000113768"/>
<dbReference type="ProteomicsDB" id="267289"/>
<dbReference type="Pumba" id="Q61371"/>
<dbReference type="DNASU" id="21821"/>
<dbReference type="GeneID" id="21821"/>
<dbReference type="KEGG" id="mmu:21821"/>
<dbReference type="AGR" id="MGI:98715"/>
<dbReference type="CTD" id="8100"/>
<dbReference type="MGI" id="MGI:98715">
    <property type="gene designation" value="Ift88"/>
</dbReference>
<dbReference type="eggNOG" id="KOG2003">
    <property type="taxonomic scope" value="Eukaryota"/>
</dbReference>
<dbReference type="InParanoid" id="Q61371"/>
<dbReference type="OMA" id="RIKIMHN"/>
<dbReference type="OrthoDB" id="1926212at2759"/>
<dbReference type="Reactome" id="R-MMU-5610787">
    <property type="pathway name" value="Hedgehog 'off' state"/>
</dbReference>
<dbReference type="Reactome" id="R-MMU-5620924">
    <property type="pathway name" value="Intraflagellar transport"/>
</dbReference>
<dbReference type="Reactome" id="R-MMU-9646399">
    <property type="pathway name" value="Aggrephagy"/>
</dbReference>
<dbReference type="BioGRID-ORCS" id="21821">
    <property type="hits" value="3 hits in 77 CRISPR screens"/>
</dbReference>
<dbReference type="ChiTaRS" id="Ift88">
    <property type="organism name" value="mouse"/>
</dbReference>
<dbReference type="PRO" id="PR:Q61371"/>
<dbReference type="Proteomes" id="UP000000589">
    <property type="component" value="Unplaced"/>
</dbReference>
<dbReference type="RNAct" id="Q61371">
    <property type="molecule type" value="protein"/>
</dbReference>
<dbReference type="GO" id="GO:0002080">
    <property type="term" value="C:acrosomal membrane"/>
    <property type="evidence" value="ECO:0000314"/>
    <property type="project" value="MGI"/>
</dbReference>
<dbReference type="GO" id="GO:0097541">
    <property type="term" value="C:axonemal basal plate"/>
    <property type="evidence" value="ECO:0000314"/>
    <property type="project" value="MGI"/>
</dbReference>
<dbReference type="GO" id="GO:0005930">
    <property type="term" value="C:axoneme"/>
    <property type="evidence" value="ECO:0000314"/>
    <property type="project" value="MGI"/>
</dbReference>
<dbReference type="GO" id="GO:0005814">
    <property type="term" value="C:centriole"/>
    <property type="evidence" value="ECO:0000314"/>
    <property type="project" value="UniProtKB"/>
</dbReference>
<dbReference type="GO" id="GO:0005813">
    <property type="term" value="C:centrosome"/>
    <property type="evidence" value="ECO:0000314"/>
    <property type="project" value="MGI"/>
</dbReference>
<dbReference type="GO" id="GO:0036064">
    <property type="term" value="C:ciliary basal body"/>
    <property type="evidence" value="ECO:0000314"/>
    <property type="project" value="UniProtKB"/>
</dbReference>
<dbReference type="GO" id="GO:0097546">
    <property type="term" value="C:ciliary base"/>
    <property type="evidence" value="ECO:0000314"/>
    <property type="project" value="MGI"/>
</dbReference>
<dbReference type="GO" id="GO:0097542">
    <property type="term" value="C:ciliary tip"/>
    <property type="evidence" value="ECO:0000314"/>
    <property type="project" value="MGI"/>
</dbReference>
<dbReference type="GO" id="GO:0005929">
    <property type="term" value="C:cilium"/>
    <property type="evidence" value="ECO:0000314"/>
    <property type="project" value="UniProtKB"/>
</dbReference>
<dbReference type="GO" id="GO:0005737">
    <property type="term" value="C:cytoplasm"/>
    <property type="evidence" value="ECO:0000314"/>
    <property type="project" value="UniProtKB"/>
</dbReference>
<dbReference type="GO" id="GO:0005829">
    <property type="term" value="C:cytosol"/>
    <property type="evidence" value="ECO:0000304"/>
    <property type="project" value="Reactome"/>
</dbReference>
<dbReference type="GO" id="GO:0030992">
    <property type="term" value="C:intraciliary transport particle B"/>
    <property type="evidence" value="ECO:0000314"/>
    <property type="project" value="UniProtKB"/>
</dbReference>
<dbReference type="GO" id="GO:0060091">
    <property type="term" value="C:kinocilium"/>
    <property type="evidence" value="ECO:0000314"/>
    <property type="project" value="MGI"/>
</dbReference>
<dbReference type="GO" id="GO:0002177">
    <property type="term" value="C:manchette"/>
    <property type="evidence" value="ECO:0000314"/>
    <property type="project" value="UniProtKB"/>
</dbReference>
<dbReference type="GO" id="GO:0031514">
    <property type="term" value="C:motile cilium"/>
    <property type="evidence" value="ECO:0000314"/>
    <property type="project" value="MGI"/>
</dbReference>
<dbReference type="GO" id="GO:0097730">
    <property type="term" value="C:non-motile cilium"/>
    <property type="evidence" value="ECO:0000314"/>
    <property type="project" value="MGI"/>
</dbReference>
<dbReference type="GO" id="GO:0002081">
    <property type="term" value="C:outer acrosomal membrane"/>
    <property type="evidence" value="ECO:0000266"/>
    <property type="project" value="MGI"/>
</dbReference>
<dbReference type="GO" id="GO:0032391">
    <property type="term" value="C:photoreceptor connecting cilium"/>
    <property type="evidence" value="ECO:0000314"/>
    <property type="project" value="UniProtKB"/>
</dbReference>
<dbReference type="GO" id="GO:0036126">
    <property type="term" value="C:sperm flagellum"/>
    <property type="evidence" value="ECO:0000314"/>
    <property type="project" value="UniProtKB"/>
</dbReference>
<dbReference type="GO" id="GO:0120212">
    <property type="term" value="C:sperm head-tail coupling apparatus"/>
    <property type="evidence" value="ECO:0000314"/>
    <property type="project" value="UniProtKB"/>
</dbReference>
<dbReference type="GO" id="GO:0005802">
    <property type="term" value="C:trans-Golgi network"/>
    <property type="evidence" value="ECO:0000266"/>
    <property type="project" value="MGI"/>
</dbReference>
<dbReference type="GO" id="GO:0019894">
    <property type="term" value="F:kinesin binding"/>
    <property type="evidence" value="ECO:0000353"/>
    <property type="project" value="MGI"/>
</dbReference>
<dbReference type="GO" id="GO:0009887">
    <property type="term" value="P:animal organ morphogenesis"/>
    <property type="evidence" value="ECO:0000315"/>
    <property type="project" value="MGI"/>
</dbReference>
<dbReference type="GO" id="GO:0009952">
    <property type="term" value="P:anterior/posterior pattern specification"/>
    <property type="evidence" value="ECO:0000315"/>
    <property type="project" value="MGI"/>
</dbReference>
<dbReference type="GO" id="GO:0007420">
    <property type="term" value="P:brain development"/>
    <property type="evidence" value="ECO:0000315"/>
    <property type="project" value="MGI"/>
</dbReference>
<dbReference type="GO" id="GO:0055007">
    <property type="term" value="P:cardiac muscle cell differentiation"/>
    <property type="evidence" value="ECO:0000315"/>
    <property type="project" value="MGI"/>
</dbReference>
<dbReference type="GO" id="GO:0060411">
    <property type="term" value="P:cardiac septum morphogenesis"/>
    <property type="evidence" value="ECO:0000315"/>
    <property type="project" value="MGI"/>
</dbReference>
<dbReference type="GO" id="GO:0060271">
    <property type="term" value="P:cilium assembly"/>
    <property type="evidence" value="ECO:0000315"/>
    <property type="project" value="UniProtKB"/>
</dbReference>
<dbReference type="GO" id="GO:0003341">
    <property type="term" value="P:cilium movement"/>
    <property type="evidence" value="ECO:0000315"/>
    <property type="project" value="MGI"/>
</dbReference>
<dbReference type="GO" id="GO:0090102">
    <property type="term" value="P:cochlea development"/>
    <property type="evidence" value="ECO:0000316"/>
    <property type="project" value="MGI"/>
</dbReference>
<dbReference type="GO" id="GO:0031122">
    <property type="term" value="P:cytoplasmic microtubule organization"/>
    <property type="evidence" value="ECO:0000315"/>
    <property type="project" value="MGI"/>
</dbReference>
<dbReference type="GO" id="GO:0007368">
    <property type="term" value="P:determination of left/right symmetry"/>
    <property type="evidence" value="ECO:0000315"/>
    <property type="project" value="MGI"/>
</dbReference>
<dbReference type="GO" id="GO:0009953">
    <property type="term" value="P:dorsal/ventral pattern formation"/>
    <property type="evidence" value="ECO:0000315"/>
    <property type="project" value="MGI"/>
</dbReference>
<dbReference type="GO" id="GO:0042733">
    <property type="term" value="P:embryonic digit morphogenesis"/>
    <property type="evidence" value="ECO:0000315"/>
    <property type="project" value="MGI"/>
</dbReference>
<dbReference type="GO" id="GO:0001886">
    <property type="term" value="P:endothelial cell morphogenesis"/>
    <property type="evidence" value="ECO:0000315"/>
    <property type="project" value="MGI"/>
</dbReference>
<dbReference type="GO" id="GO:0036334">
    <property type="term" value="P:epidermal stem cell homeostasis"/>
    <property type="evidence" value="ECO:0000315"/>
    <property type="project" value="MGI"/>
</dbReference>
<dbReference type="GO" id="GO:0008544">
    <property type="term" value="P:epidermis development"/>
    <property type="evidence" value="ECO:0000315"/>
    <property type="project" value="MGI"/>
</dbReference>
<dbReference type="GO" id="GO:0001654">
    <property type="term" value="P:eye development"/>
    <property type="evidence" value="ECO:0000316"/>
    <property type="project" value="MGI"/>
</dbReference>
<dbReference type="GO" id="GO:0030900">
    <property type="term" value="P:forebrain development"/>
    <property type="evidence" value="ECO:0000315"/>
    <property type="project" value="MGI"/>
</dbReference>
<dbReference type="GO" id="GO:0048853">
    <property type="term" value="P:forebrain morphogenesis"/>
    <property type="evidence" value="ECO:0000315"/>
    <property type="project" value="MGI"/>
</dbReference>
<dbReference type="GO" id="GO:0007507">
    <property type="term" value="P:heart development"/>
    <property type="evidence" value="ECO:0000316"/>
    <property type="project" value="MGI"/>
</dbReference>
<dbReference type="GO" id="GO:0060914">
    <property type="term" value="P:heart formation"/>
    <property type="evidence" value="ECO:0000315"/>
    <property type="project" value="MGI"/>
</dbReference>
<dbReference type="GO" id="GO:0060122">
    <property type="term" value="P:inner ear receptor cell stereocilium organization"/>
    <property type="evidence" value="ECO:0000315"/>
    <property type="project" value="MGI"/>
</dbReference>
<dbReference type="GO" id="GO:0035720">
    <property type="term" value="P:intraciliary anterograde transport"/>
    <property type="evidence" value="ECO:0000303"/>
    <property type="project" value="ComplexPortal"/>
</dbReference>
<dbReference type="GO" id="GO:0043616">
    <property type="term" value="P:keratinocyte proliferation"/>
    <property type="evidence" value="ECO:0000315"/>
    <property type="project" value="MGI"/>
</dbReference>
<dbReference type="GO" id="GO:0001822">
    <property type="term" value="P:kidney development"/>
    <property type="evidence" value="ECO:0000315"/>
    <property type="project" value="MGI"/>
</dbReference>
<dbReference type="GO" id="GO:0060173">
    <property type="term" value="P:limb development"/>
    <property type="evidence" value="ECO:0000316"/>
    <property type="project" value="MGI"/>
</dbReference>
<dbReference type="GO" id="GO:0001889">
    <property type="term" value="P:liver development"/>
    <property type="evidence" value="ECO:0000315"/>
    <property type="project" value="MGI"/>
</dbReference>
<dbReference type="GO" id="GO:0030324">
    <property type="term" value="P:lung development"/>
    <property type="evidence" value="ECO:0000315"/>
    <property type="project" value="MGI"/>
</dbReference>
<dbReference type="GO" id="GO:0060426">
    <property type="term" value="P:lung vasculature development"/>
    <property type="evidence" value="ECO:0000315"/>
    <property type="project" value="MGI"/>
</dbReference>
<dbReference type="GO" id="GO:0050680">
    <property type="term" value="P:negative regulation of epithelial cell proliferation"/>
    <property type="evidence" value="ECO:0000315"/>
    <property type="project" value="MGI"/>
</dbReference>
<dbReference type="GO" id="GO:0010839">
    <property type="term" value="P:negative regulation of keratinocyte proliferation"/>
    <property type="evidence" value="ECO:0000315"/>
    <property type="project" value="MGI"/>
</dbReference>
<dbReference type="GO" id="GO:0007399">
    <property type="term" value="P:nervous system development"/>
    <property type="evidence" value="ECO:0000315"/>
    <property type="project" value="MGI"/>
</dbReference>
<dbReference type="GO" id="GO:0061351">
    <property type="term" value="P:neural precursor cell proliferation"/>
    <property type="evidence" value="ECO:0000315"/>
    <property type="project" value="MGI"/>
</dbReference>
<dbReference type="GO" id="GO:1905515">
    <property type="term" value="P:non-motile cilium assembly"/>
    <property type="evidence" value="ECO:0000315"/>
    <property type="project" value="MGI"/>
</dbReference>
<dbReference type="GO" id="GO:0007219">
    <property type="term" value="P:Notch signaling pathway"/>
    <property type="evidence" value="ECO:0000315"/>
    <property type="project" value="MGI"/>
</dbReference>
<dbReference type="GO" id="GO:0031016">
    <property type="term" value="P:pancreas development"/>
    <property type="evidence" value="ECO:0000315"/>
    <property type="project" value="MGI"/>
</dbReference>
<dbReference type="GO" id="GO:0045724">
    <property type="term" value="P:positive regulation of cilium assembly"/>
    <property type="evidence" value="ECO:0000250"/>
    <property type="project" value="UniProtKB"/>
</dbReference>
<dbReference type="GO" id="GO:0043568">
    <property type="term" value="P:positive regulation of insulin-like growth factor receptor signaling pathway"/>
    <property type="evidence" value="ECO:0000315"/>
    <property type="project" value="MGI"/>
</dbReference>
<dbReference type="GO" id="GO:1903929">
    <property type="term" value="P:primary palate development"/>
    <property type="evidence" value="ECO:0000316"/>
    <property type="project" value="MGI"/>
</dbReference>
<dbReference type="GO" id="GO:0008104">
    <property type="term" value="P:protein localization"/>
    <property type="evidence" value="ECO:0000315"/>
    <property type="project" value="MGI"/>
</dbReference>
<dbReference type="GO" id="GO:2000785">
    <property type="term" value="P:regulation of autophagosome assembly"/>
    <property type="evidence" value="ECO:0000315"/>
    <property type="project" value="UniProtKB"/>
</dbReference>
<dbReference type="GO" id="GO:1902017">
    <property type="term" value="P:regulation of cilium assembly"/>
    <property type="evidence" value="ECO:0000315"/>
    <property type="project" value="UniProtKB"/>
</dbReference>
<dbReference type="GO" id="GO:0045598">
    <property type="term" value="P:regulation of fat cell differentiation"/>
    <property type="evidence" value="ECO:0000315"/>
    <property type="project" value="MGI"/>
</dbReference>
<dbReference type="GO" id="GO:0060259">
    <property type="term" value="P:regulation of feeding behavior"/>
    <property type="evidence" value="ECO:0000315"/>
    <property type="project" value="MGI"/>
</dbReference>
<dbReference type="GO" id="GO:0042487">
    <property type="term" value="P:regulation of odontogenesis of dentin-containing tooth"/>
    <property type="evidence" value="ECO:0000315"/>
    <property type="project" value="MGI"/>
</dbReference>
<dbReference type="GO" id="GO:0070613">
    <property type="term" value="P:regulation of protein processing"/>
    <property type="evidence" value="ECO:0000315"/>
    <property type="project" value="MGI"/>
</dbReference>
<dbReference type="GO" id="GO:0034405">
    <property type="term" value="P:response to fluid shear stress"/>
    <property type="evidence" value="ECO:0000315"/>
    <property type="project" value="MGI"/>
</dbReference>
<dbReference type="GO" id="GO:0007224">
    <property type="term" value="P:smoothened signaling pathway"/>
    <property type="evidence" value="ECO:0000315"/>
    <property type="project" value="MGI"/>
</dbReference>
<dbReference type="GO" id="GO:0007288">
    <property type="term" value="P:sperm axoneme assembly"/>
    <property type="evidence" value="ECO:0000315"/>
    <property type="project" value="MGI"/>
</dbReference>
<dbReference type="GO" id="GO:0007290">
    <property type="term" value="P:spermatid nucleus elongation"/>
    <property type="evidence" value="ECO:0000315"/>
    <property type="project" value="MGI"/>
</dbReference>
<dbReference type="GO" id="GO:0021513">
    <property type="term" value="P:spinal cord dorsal/ventral patterning"/>
    <property type="evidence" value="ECO:0000315"/>
    <property type="project" value="MGI"/>
</dbReference>
<dbReference type="GO" id="GO:0021537">
    <property type="term" value="P:telencephalon development"/>
    <property type="evidence" value="ECO:0000315"/>
    <property type="project" value="MGI"/>
</dbReference>
<dbReference type="FunFam" id="1.25.40.10:FF:000106">
    <property type="entry name" value="Intraflagellar transport 88 homolog (Chlamydomonas)"/>
    <property type="match status" value="1"/>
</dbReference>
<dbReference type="FunFam" id="1.25.40.10:FF:000135">
    <property type="entry name" value="intraflagellar transport protein 88 homolog isoform X1"/>
    <property type="match status" value="1"/>
</dbReference>
<dbReference type="Gene3D" id="1.25.40.10">
    <property type="entry name" value="Tetratricopeptide repeat domain"/>
    <property type="match status" value="2"/>
</dbReference>
<dbReference type="InterPro" id="IPR011990">
    <property type="entry name" value="TPR-like_helical_dom_sf"/>
</dbReference>
<dbReference type="InterPro" id="IPR019734">
    <property type="entry name" value="TPR_rpt"/>
</dbReference>
<dbReference type="PANTHER" id="PTHR44117">
    <property type="entry name" value="INTRAFLAGELLAR TRANSPORT PROTEIN 88 HOMOLOG"/>
    <property type="match status" value="1"/>
</dbReference>
<dbReference type="PANTHER" id="PTHR44117:SF1">
    <property type="entry name" value="INTRAFLAGELLAR TRANSPORT PROTEIN 88 HOMOLOG"/>
    <property type="match status" value="1"/>
</dbReference>
<dbReference type="Pfam" id="PF12895">
    <property type="entry name" value="ANAPC3"/>
    <property type="match status" value="1"/>
</dbReference>
<dbReference type="Pfam" id="PF13424">
    <property type="entry name" value="TPR_12"/>
    <property type="match status" value="1"/>
</dbReference>
<dbReference type="Pfam" id="PF13174">
    <property type="entry name" value="TPR_6"/>
    <property type="match status" value="1"/>
</dbReference>
<dbReference type="Pfam" id="PF13181">
    <property type="entry name" value="TPR_8"/>
    <property type="match status" value="1"/>
</dbReference>
<dbReference type="SMART" id="SM00028">
    <property type="entry name" value="TPR"/>
    <property type="match status" value="11"/>
</dbReference>
<dbReference type="SUPFAM" id="SSF48452">
    <property type="entry name" value="TPR-like"/>
    <property type="match status" value="2"/>
</dbReference>
<dbReference type="PROSITE" id="PS50005">
    <property type="entry name" value="TPR"/>
    <property type="match status" value="10"/>
</dbReference>
<dbReference type="PROSITE" id="PS50293">
    <property type="entry name" value="TPR_REGION"/>
    <property type="match status" value="2"/>
</dbReference>
<sequence length="824" mass="92994">MENVHLAPETDEDDLYSGFNDYNPAYDTEELENDTGFQQAVRTSHGRRPPVTAKIPSTAVSRPIATGYGSKTSLTSSMGRPMTGTIQDGVARPMTAVRAAGFSKAALRGSAFDPLGQSRGPAPPLEAKNEDSPEEKIRQLEKKVNELVEESCIANSCGDLKLALEKAKDAGRKERVLVRQREQVTSPENINLDLTYSVLFNLASQYSANEMYAEALNTYQVIVKNKMFSNAGRLKVNMGNIYLKQRNYSKAIKFYRMALDQIPSVHKEMRIKIMQNIGITFIKTGQYSDAINSFEHIMSMAPSLKAGFNLILSCFAIGDREKMKKAFQKLIAVPLEIDEDDKYISPSDDPHTNLLIEAIKNDHLRQMERERKAMAEKYIMTAAKLIAPVIEASFAVGYNWCVEVVKASQYVELANDLEINKAITYLRQKDFNQAVDTLKMFEKKDSRVKSAAATNLSFLYYLENEFAQASSYADLAVNSDRYNPSALTNKGNTVFANGDYEKAAEFYKEALRNDSSCTEALYNIGLTYKKLNRLDEALDSFLKLHAILRNSAQVLCQIANIYELMEDPNQAIEWLMQLISVVPTDSQALSKLGELYDSEGDKSQAFQYYYESYRYFPSNIEVIEWLGAYYIDTQFCEKAIQYFERASLIQPTQVKWQLMVASCFRRSGNYQKALDTYKEIHRKFPENVECLRFLVRLCTDIGLKEVQEYATKLKRLEKMKEMREQRIKSGRDSSGGSRSKREGSAGSDSGQNNSASSKSERLSAKLRALPGTDEPYESSGNKEIDASYVDPLGPQIERPKTAAKKRIDEDDFADEELGDDLLPE</sequence>
<protein>
    <recommendedName>
        <fullName>Intraflagellar transport protein 88 homolog</fullName>
    </recommendedName>
    <alternativeName>
        <fullName>Recessive polycystic kidney disease protein Tg737</fullName>
    </alternativeName>
    <alternativeName>
        <fullName>Tetratricopeptide repeat protein 10</fullName>
        <shortName>TPR repeat protein 10</shortName>
    </alternativeName>
    <alternativeName>
        <fullName>TgN(Imorpk)737Rpw</fullName>
    </alternativeName>
</protein>
<comment type="function">
    <text evidence="3 7 13">Positively regulates primary cilium biogenesis (PubMed:11062270, PubMed:21289087, PubMed:31761534). Also involved in autophagy since it is required for trafficking of ATG16L and the expansion of the autophagic compartment.</text>
</comment>
<comment type="subunit">
    <text evidence="1 3 4 5 9 10 11 14 15 16">Component of the IFT complex B, at least composed of IFT20, IFT22, IFT25, IFT27, IFT46, IFT52, TRAF3IP1/IFT54, IFT57, IFT74, IFT80, IFT81, and IFT88 (PubMed:19253336, PubMed:23810713). Interacts with IFT20, IFT22, IFT25, IFT27, IFT52, TRAF3IP1, IFT74, IFT80 and IFT81 (PubMed:19253336). Interacts with IFT172 (PubMed:11062270). Interacts with IFT57 (PubMed:11062270, PubMed:19253336, PubMed:23810713). Interacts with IFT46 (PubMed:17312020, PubMed:19253336). Interacts with IFT70B (PubMed:23810713). Interacts with C2CD3 (PubMed:24469809). Interacts with ENTR1 (via N-terminus) (By similarity). Interacts with LRRC56 (By similarity). Interacts with DZIP1 (PubMed:23955340). Interacts with CCDC38 (PubMed:35587122). Interacts with CCDC146 (PubMed:38038747). Interacts with CFAP53 (PubMed:34124066).</text>
</comment>
<comment type="subcellular location">
    <subcellularLocation>
        <location evidence="6 8">Cytoplasm</location>
        <location evidence="6 8">Cytoskeleton</location>
        <location evidence="6 8">Microtubule organizing center</location>
        <location evidence="6 8">Centrosome</location>
        <location evidence="6 8">Centriole</location>
    </subcellularLocation>
    <subcellularLocation>
        <location evidence="5 6">Cytoplasm</location>
        <location evidence="5 6">Cytoskeleton</location>
        <location evidence="5 6">Cilium basal body</location>
    </subcellularLocation>
    <subcellularLocation>
        <location evidence="1">Cell projection</location>
        <location evidence="1">Cilium</location>
    </subcellularLocation>
    <subcellularLocation>
        <location evidence="1">Cytoplasm</location>
        <location evidence="1">Cytoskeleton</location>
        <location evidence="1">Microtubule organizing center</location>
        <location evidence="1">Centrosome</location>
    </subcellularLocation>
    <subcellularLocation>
        <location evidence="12">Cytoplasm</location>
    </subcellularLocation>
    <subcellularLocation>
        <location evidence="12 14">Cell projection</location>
        <location evidence="12 14">Cilium</location>
        <location evidence="12 14">Flagellum</location>
    </subcellularLocation>
    <subcellularLocation>
        <location evidence="14">Cytoplasm</location>
        <location evidence="14">Cytoskeleton</location>
    </subcellularLocation>
    <text evidence="1 14">Colocalizes with ENTR1 and gamma-tubulin at the basal body of primary cilia (By similarity). Colocalizes with ENTR1 and pericentrin at the centrosome (By similarity). In sperm cells, localizes to the manchette, head-tail coupling apparatus and flagellum (PubMed:34124066).</text>
</comment>
<comment type="tissue specificity">
    <text evidence="12">Testis.</text>
</comment>
<comment type="developmental stage">
    <text evidence="14">In the testis, first observed in round spermatid flagella and continues to be detected in elongated spermatids (at protein level).</text>
</comment>
<comment type="disease">
    <text>Defects in Ift88 are the cause of recessive bilateral polycystic kidney disease (PKD) with collecting duct and tubule ectasia, and a liver lesion involving biliary dysplasia and/or portal fibrosis.</text>
</comment>
<comment type="disruption phenotype">
    <text evidence="7 13">Cilia absent or reduced, virtually no cilia of the normal 5 uM mean length (PubMed:21289087). Conditional knockdown in preadipocytes results in loss of cilia. Mutant mice show a significant reduction of gonadal white adipose tissue and total fat mass associated with reduced serum LEP levels (PubMed:31761534).</text>
</comment>
<comment type="sequence caution" evidence="17">
    <conflict type="erroneous initiation">
        <sequence resource="EMBL-CDS" id="BAE22424"/>
    </conflict>
    <text>Extended N-terminus.</text>
</comment>
<accession>Q61371</accession>
<accession>E9QKU0</accession>
<accession>Q3UXY9</accession>
<accession>Q921J5</accession>
<evidence type="ECO:0000250" key="1">
    <source>
        <dbReference type="UniProtKB" id="Q13099"/>
    </source>
</evidence>
<evidence type="ECO:0000256" key="2">
    <source>
        <dbReference type="SAM" id="MobiDB-lite"/>
    </source>
</evidence>
<evidence type="ECO:0000269" key="3">
    <source>
    </source>
</evidence>
<evidence type="ECO:0000269" key="4">
    <source>
    </source>
</evidence>
<evidence type="ECO:0000269" key="5">
    <source>
    </source>
</evidence>
<evidence type="ECO:0000269" key="6">
    <source>
    </source>
</evidence>
<evidence type="ECO:0000269" key="7">
    <source>
    </source>
</evidence>
<evidence type="ECO:0000269" key="8">
    <source>
    </source>
</evidence>
<evidence type="ECO:0000269" key="9">
    <source>
    </source>
</evidence>
<evidence type="ECO:0000269" key="10">
    <source>
    </source>
</evidence>
<evidence type="ECO:0000269" key="11">
    <source>
    </source>
</evidence>
<evidence type="ECO:0000269" key="12">
    <source>
    </source>
</evidence>
<evidence type="ECO:0000269" key="13">
    <source>
    </source>
</evidence>
<evidence type="ECO:0000269" key="14">
    <source>
    </source>
</evidence>
<evidence type="ECO:0000269" key="15">
    <source>
    </source>
</evidence>
<evidence type="ECO:0000269" key="16">
    <source>
    </source>
</evidence>
<evidence type="ECO:0000305" key="17"/>
<proteinExistence type="evidence at protein level"/>
<feature type="chain" id="PRO_0000106392" description="Intraflagellar transport protein 88 homolog">
    <location>
        <begin position="1"/>
        <end position="824"/>
    </location>
</feature>
<feature type="repeat" description="TPR 1">
    <location>
        <begin position="196"/>
        <end position="229"/>
    </location>
</feature>
<feature type="repeat" description="TPR 2">
    <location>
        <begin position="232"/>
        <end position="265"/>
    </location>
</feature>
<feature type="repeat" description="TPR 3">
    <location>
        <begin position="271"/>
        <end position="304"/>
    </location>
</feature>
<feature type="repeat" description="TPR 4">
    <location>
        <begin position="415"/>
        <end position="448"/>
    </location>
</feature>
<feature type="repeat" description="TPR 5">
    <location>
        <begin position="450"/>
        <end position="483"/>
    </location>
</feature>
<feature type="repeat" description="TPR 6">
    <location>
        <begin position="484"/>
        <end position="517"/>
    </location>
</feature>
<feature type="repeat" description="TPR 7">
    <location>
        <begin position="518"/>
        <end position="551"/>
    </location>
</feature>
<feature type="repeat" description="TPR 8">
    <location>
        <begin position="552"/>
        <end position="585"/>
    </location>
</feature>
<feature type="repeat" description="TPR 9">
    <location>
        <begin position="586"/>
        <end position="619"/>
    </location>
</feature>
<feature type="repeat" description="TPR 10">
    <location>
        <begin position="620"/>
        <end position="653"/>
    </location>
</feature>
<feature type="repeat" description="TPR 11">
    <location>
        <begin position="654"/>
        <end position="687"/>
    </location>
</feature>
<feature type="region of interest" description="Disordered" evidence="2">
    <location>
        <begin position="1"/>
        <end position="27"/>
    </location>
</feature>
<feature type="region of interest" description="Disordered" evidence="2">
    <location>
        <begin position="111"/>
        <end position="134"/>
    </location>
</feature>
<feature type="region of interest" description="Disordered" evidence="2">
    <location>
        <begin position="721"/>
        <end position="824"/>
    </location>
</feature>
<feature type="compositionally biased region" description="Basic and acidic residues" evidence="2">
    <location>
        <begin position="721"/>
        <end position="731"/>
    </location>
</feature>
<feature type="compositionally biased region" description="Polar residues" evidence="2">
    <location>
        <begin position="748"/>
        <end position="757"/>
    </location>
</feature>
<feature type="compositionally biased region" description="Basic and acidic residues" evidence="2">
    <location>
        <begin position="797"/>
        <end position="808"/>
    </location>
</feature>
<feature type="compositionally biased region" description="Acidic residues" evidence="2">
    <location>
        <begin position="809"/>
        <end position="824"/>
    </location>
</feature>
<feature type="sequence conflict" description="In Ref. 4; AAH12250." evidence="17" ref="4">
    <original>I</original>
    <variation>T</variation>
    <location>
        <position position="64"/>
    </location>
</feature>
<feature type="sequence conflict" description="In Ref. 4; AAH12250." evidence="17" ref="4">
    <original>Y</original>
    <variation>H</variation>
    <location>
        <position position="242"/>
    </location>
</feature>
<feature type="sequence conflict" description="In Ref. 2; BAE22424." evidence="17" ref="2">
    <original>L</original>
    <variation>M</variation>
    <location>
        <position position="459"/>
    </location>
</feature>
<feature type="sequence conflict" description="In Ref. 4; AAH12250." evidence="17" ref="4">
    <original>D</original>
    <variation>E</variation>
    <location>
        <position position="700"/>
    </location>
</feature>
<feature type="sequence conflict" description="In Ref. 1; AAB59705." evidence="17" ref="1">
    <original>P</original>
    <variation>S</variation>
    <location>
        <position position="823"/>
    </location>
</feature>
<organism>
    <name type="scientific">Mus musculus</name>
    <name type="common">Mouse</name>
    <dbReference type="NCBI Taxonomy" id="10090"/>
    <lineage>
        <taxon>Eukaryota</taxon>
        <taxon>Metazoa</taxon>
        <taxon>Chordata</taxon>
        <taxon>Craniata</taxon>
        <taxon>Vertebrata</taxon>
        <taxon>Euteleostomi</taxon>
        <taxon>Mammalia</taxon>
        <taxon>Eutheria</taxon>
        <taxon>Euarchontoglires</taxon>
        <taxon>Glires</taxon>
        <taxon>Rodentia</taxon>
        <taxon>Myomorpha</taxon>
        <taxon>Muroidea</taxon>
        <taxon>Muridae</taxon>
        <taxon>Murinae</taxon>
        <taxon>Mus</taxon>
        <taxon>Mus</taxon>
    </lineage>
</organism>